<dbReference type="EMBL" id="BX548175">
    <property type="protein sequence ID" value="CAE21551.1"/>
    <property type="molecule type" value="Genomic_DNA"/>
</dbReference>
<dbReference type="RefSeq" id="WP_011130744.1">
    <property type="nucleotide sequence ID" value="NC_005071.1"/>
</dbReference>
<dbReference type="SMR" id="Q7TUT2"/>
<dbReference type="KEGG" id="pmt:PMT_1376"/>
<dbReference type="eggNOG" id="COG0199">
    <property type="taxonomic scope" value="Bacteria"/>
</dbReference>
<dbReference type="HOGENOM" id="CLU_139869_0_1_3"/>
<dbReference type="OrthoDB" id="9810484at2"/>
<dbReference type="Proteomes" id="UP000001423">
    <property type="component" value="Chromosome"/>
</dbReference>
<dbReference type="GO" id="GO:0005737">
    <property type="term" value="C:cytoplasm"/>
    <property type="evidence" value="ECO:0007669"/>
    <property type="project" value="UniProtKB-ARBA"/>
</dbReference>
<dbReference type="GO" id="GO:0015935">
    <property type="term" value="C:small ribosomal subunit"/>
    <property type="evidence" value="ECO:0007669"/>
    <property type="project" value="TreeGrafter"/>
</dbReference>
<dbReference type="GO" id="GO:0019843">
    <property type="term" value="F:rRNA binding"/>
    <property type="evidence" value="ECO:0007669"/>
    <property type="project" value="UniProtKB-UniRule"/>
</dbReference>
<dbReference type="GO" id="GO:0003735">
    <property type="term" value="F:structural constituent of ribosome"/>
    <property type="evidence" value="ECO:0007669"/>
    <property type="project" value="InterPro"/>
</dbReference>
<dbReference type="GO" id="GO:0006412">
    <property type="term" value="P:translation"/>
    <property type="evidence" value="ECO:0007669"/>
    <property type="project" value="UniProtKB-UniRule"/>
</dbReference>
<dbReference type="FunFam" id="1.10.287.1480:FF:000001">
    <property type="entry name" value="30S ribosomal protein S14"/>
    <property type="match status" value="1"/>
</dbReference>
<dbReference type="Gene3D" id="1.10.287.1480">
    <property type="match status" value="1"/>
</dbReference>
<dbReference type="HAMAP" id="MF_00537">
    <property type="entry name" value="Ribosomal_uS14_1"/>
    <property type="match status" value="1"/>
</dbReference>
<dbReference type="InterPro" id="IPR001209">
    <property type="entry name" value="Ribosomal_uS14"/>
</dbReference>
<dbReference type="InterPro" id="IPR023036">
    <property type="entry name" value="Ribosomal_uS14_bac/plastid"/>
</dbReference>
<dbReference type="InterPro" id="IPR018271">
    <property type="entry name" value="Ribosomal_uS14_CS"/>
</dbReference>
<dbReference type="NCBIfam" id="NF006477">
    <property type="entry name" value="PRK08881.1"/>
    <property type="match status" value="1"/>
</dbReference>
<dbReference type="PANTHER" id="PTHR19836">
    <property type="entry name" value="30S RIBOSOMAL PROTEIN S14"/>
    <property type="match status" value="1"/>
</dbReference>
<dbReference type="PANTHER" id="PTHR19836:SF19">
    <property type="entry name" value="SMALL RIBOSOMAL SUBUNIT PROTEIN US14M"/>
    <property type="match status" value="1"/>
</dbReference>
<dbReference type="Pfam" id="PF00253">
    <property type="entry name" value="Ribosomal_S14"/>
    <property type="match status" value="1"/>
</dbReference>
<dbReference type="SUPFAM" id="SSF57716">
    <property type="entry name" value="Glucocorticoid receptor-like (DNA-binding domain)"/>
    <property type="match status" value="1"/>
</dbReference>
<dbReference type="PROSITE" id="PS00527">
    <property type="entry name" value="RIBOSOMAL_S14"/>
    <property type="match status" value="1"/>
</dbReference>
<comment type="function">
    <text evidence="1">Binds 16S rRNA, required for the assembly of 30S particles and may also be responsible for determining the conformation of the 16S rRNA at the A site.</text>
</comment>
<comment type="subunit">
    <text evidence="1">Part of the 30S ribosomal subunit. Contacts proteins S3 and S10.</text>
</comment>
<comment type="similarity">
    <text evidence="1">Belongs to the universal ribosomal protein uS14 family.</text>
</comment>
<keyword id="KW-1185">Reference proteome</keyword>
<keyword id="KW-0687">Ribonucleoprotein</keyword>
<keyword id="KW-0689">Ribosomal protein</keyword>
<keyword id="KW-0694">RNA-binding</keyword>
<keyword id="KW-0699">rRNA-binding</keyword>
<gene>
    <name evidence="1" type="primary">rpsN</name>
    <name evidence="1" type="synonym">rps14</name>
    <name type="ordered locus">PMT_1376</name>
</gene>
<protein>
    <recommendedName>
        <fullName evidence="1">Small ribosomal subunit protein uS14</fullName>
    </recommendedName>
    <alternativeName>
        <fullName evidence="2">30S ribosomal protein S14</fullName>
    </alternativeName>
</protein>
<feature type="chain" id="PRO_1000128504" description="Small ribosomal subunit protein uS14">
    <location>
        <begin position="1"/>
        <end position="100"/>
    </location>
</feature>
<name>RS14_PROMM</name>
<organism>
    <name type="scientific">Prochlorococcus marinus (strain MIT 9313)</name>
    <dbReference type="NCBI Taxonomy" id="74547"/>
    <lineage>
        <taxon>Bacteria</taxon>
        <taxon>Bacillati</taxon>
        <taxon>Cyanobacteriota</taxon>
        <taxon>Cyanophyceae</taxon>
        <taxon>Synechococcales</taxon>
        <taxon>Prochlorococcaceae</taxon>
        <taxon>Prochlorococcus</taxon>
    </lineage>
</organism>
<evidence type="ECO:0000255" key="1">
    <source>
        <dbReference type="HAMAP-Rule" id="MF_00537"/>
    </source>
</evidence>
<evidence type="ECO:0000305" key="2"/>
<proteinExistence type="inferred from homology"/>
<reference key="1">
    <citation type="journal article" date="2003" name="Nature">
        <title>Genome divergence in two Prochlorococcus ecotypes reflects oceanic niche differentiation.</title>
        <authorList>
            <person name="Rocap G."/>
            <person name="Larimer F.W."/>
            <person name="Lamerdin J.E."/>
            <person name="Malfatti S."/>
            <person name="Chain P."/>
            <person name="Ahlgren N.A."/>
            <person name="Arellano A."/>
            <person name="Coleman M."/>
            <person name="Hauser L."/>
            <person name="Hess W.R."/>
            <person name="Johnson Z.I."/>
            <person name="Land M.L."/>
            <person name="Lindell D."/>
            <person name="Post A.F."/>
            <person name="Regala W."/>
            <person name="Shah M."/>
            <person name="Shaw S.L."/>
            <person name="Steglich C."/>
            <person name="Sullivan M.B."/>
            <person name="Ting C.S."/>
            <person name="Tolonen A."/>
            <person name="Webb E.A."/>
            <person name="Zinser E.R."/>
            <person name="Chisholm S.W."/>
        </authorList>
    </citation>
    <scope>NUCLEOTIDE SEQUENCE [LARGE SCALE GENOMIC DNA]</scope>
    <source>
        <strain>MIT 9313</strain>
    </source>
</reference>
<sequence length="100" mass="11600">MAKKSMIARDVKRKKIVERYAAKRAALMEAFNAAKDPMQRLEIHRKIQALPRNSAPNRIRNRCWATGKPRGVYRDFGLCRNQLRERAHKGELPGVVKSSW</sequence>
<accession>Q7TUT2</accession>